<evidence type="ECO:0000255" key="1">
    <source>
        <dbReference type="HAMAP-Rule" id="MF_01151"/>
    </source>
</evidence>
<evidence type="ECO:0000256" key="2">
    <source>
        <dbReference type="SAM" id="MobiDB-lite"/>
    </source>
</evidence>
<reference key="1">
    <citation type="journal article" date="2003" name="Nature">
        <title>The genome of a motile marine Synechococcus.</title>
        <authorList>
            <person name="Palenik B."/>
            <person name="Brahamsha B."/>
            <person name="Larimer F.W."/>
            <person name="Land M.L."/>
            <person name="Hauser L."/>
            <person name="Chain P."/>
            <person name="Lamerdin J.E."/>
            <person name="Regala W."/>
            <person name="Allen E.E."/>
            <person name="McCarren J."/>
            <person name="Paulsen I.T."/>
            <person name="Dufresne A."/>
            <person name="Partensky F."/>
            <person name="Webb E.A."/>
            <person name="Waterbury J."/>
        </authorList>
    </citation>
    <scope>NUCLEOTIDE SEQUENCE [LARGE SCALE GENOMIC DNA]</scope>
    <source>
        <strain>WH8102</strain>
    </source>
</reference>
<protein>
    <recommendedName>
        <fullName evidence="1">Protein GrpE</fullName>
    </recommendedName>
    <alternativeName>
        <fullName evidence="1">HSP-70 cofactor</fullName>
    </alternativeName>
</protein>
<name>GRPE_PARMW</name>
<organism>
    <name type="scientific">Parasynechococcus marenigrum (strain WH8102)</name>
    <dbReference type="NCBI Taxonomy" id="84588"/>
    <lineage>
        <taxon>Bacteria</taxon>
        <taxon>Bacillati</taxon>
        <taxon>Cyanobacteriota</taxon>
        <taxon>Cyanophyceae</taxon>
        <taxon>Synechococcales</taxon>
        <taxon>Prochlorococcaceae</taxon>
        <taxon>Parasynechococcus</taxon>
        <taxon>Parasynechococcus marenigrum</taxon>
    </lineage>
</organism>
<feature type="chain" id="PRO_0000113879" description="Protein GrpE">
    <location>
        <begin position="1"/>
        <end position="218"/>
    </location>
</feature>
<feature type="region of interest" description="Disordered" evidence="2">
    <location>
        <begin position="1"/>
        <end position="44"/>
    </location>
</feature>
<feature type="region of interest" description="Disordered" evidence="2">
    <location>
        <begin position="198"/>
        <end position="218"/>
    </location>
</feature>
<feature type="compositionally biased region" description="Polar residues" evidence="2">
    <location>
        <begin position="1"/>
        <end position="10"/>
    </location>
</feature>
<feature type="compositionally biased region" description="Low complexity" evidence="2">
    <location>
        <begin position="200"/>
        <end position="218"/>
    </location>
</feature>
<accession>Q7UA77</accession>
<sequence length="218" mass="24227">MSGEASTPAQDPSVEPLDAAPVAAEPEVMSTETPAEGSLTDPAERLQQLEHELQTLKQEHETLQSQYMRIAADFDNFRKRQSRDQEDIRQQLVCSTLSEILPVVDNFERARQQLNPESEEAQALHRSYQGLYKQLVDVLKQQGVARMEVVGQLFDPTLHEAVLREESTEQPEDVVIEELQRGYHLNGKVLRHALVKVSMGPGPSADAEGAASAEAEDS</sequence>
<proteinExistence type="inferred from homology"/>
<gene>
    <name evidence="1" type="primary">grpE</name>
    <name type="ordered locus">SYNW0023</name>
</gene>
<dbReference type="EMBL" id="BX569689">
    <property type="protein sequence ID" value="CAE06538.1"/>
    <property type="molecule type" value="Genomic_DNA"/>
</dbReference>
<dbReference type="RefSeq" id="WP_011126901.1">
    <property type="nucleotide sequence ID" value="NC_005070.1"/>
</dbReference>
<dbReference type="SMR" id="Q7UA77"/>
<dbReference type="STRING" id="84588.SYNW0023"/>
<dbReference type="KEGG" id="syw:SYNW0023"/>
<dbReference type="eggNOG" id="COG0576">
    <property type="taxonomic scope" value="Bacteria"/>
</dbReference>
<dbReference type="HOGENOM" id="CLU_057217_5_1_3"/>
<dbReference type="Proteomes" id="UP000001422">
    <property type="component" value="Chromosome"/>
</dbReference>
<dbReference type="GO" id="GO:0005737">
    <property type="term" value="C:cytoplasm"/>
    <property type="evidence" value="ECO:0007669"/>
    <property type="project" value="UniProtKB-SubCell"/>
</dbReference>
<dbReference type="GO" id="GO:0000774">
    <property type="term" value="F:adenyl-nucleotide exchange factor activity"/>
    <property type="evidence" value="ECO:0007669"/>
    <property type="project" value="InterPro"/>
</dbReference>
<dbReference type="GO" id="GO:0042803">
    <property type="term" value="F:protein homodimerization activity"/>
    <property type="evidence" value="ECO:0007669"/>
    <property type="project" value="InterPro"/>
</dbReference>
<dbReference type="GO" id="GO:0051087">
    <property type="term" value="F:protein-folding chaperone binding"/>
    <property type="evidence" value="ECO:0007669"/>
    <property type="project" value="InterPro"/>
</dbReference>
<dbReference type="GO" id="GO:0051082">
    <property type="term" value="F:unfolded protein binding"/>
    <property type="evidence" value="ECO:0007669"/>
    <property type="project" value="TreeGrafter"/>
</dbReference>
<dbReference type="GO" id="GO:0006457">
    <property type="term" value="P:protein folding"/>
    <property type="evidence" value="ECO:0007669"/>
    <property type="project" value="InterPro"/>
</dbReference>
<dbReference type="CDD" id="cd00446">
    <property type="entry name" value="GrpE"/>
    <property type="match status" value="1"/>
</dbReference>
<dbReference type="FunFam" id="2.30.22.10:FF:000001">
    <property type="entry name" value="Protein GrpE"/>
    <property type="match status" value="1"/>
</dbReference>
<dbReference type="Gene3D" id="3.90.20.20">
    <property type="match status" value="1"/>
</dbReference>
<dbReference type="Gene3D" id="2.30.22.10">
    <property type="entry name" value="Head domain of nucleotide exchange factor GrpE"/>
    <property type="match status" value="1"/>
</dbReference>
<dbReference type="HAMAP" id="MF_01151">
    <property type="entry name" value="GrpE"/>
    <property type="match status" value="1"/>
</dbReference>
<dbReference type="InterPro" id="IPR000740">
    <property type="entry name" value="GrpE"/>
</dbReference>
<dbReference type="InterPro" id="IPR013805">
    <property type="entry name" value="GrpE_coiled_coil"/>
</dbReference>
<dbReference type="InterPro" id="IPR009012">
    <property type="entry name" value="GrpE_head"/>
</dbReference>
<dbReference type="NCBIfam" id="NF010741">
    <property type="entry name" value="PRK14143.1"/>
    <property type="match status" value="1"/>
</dbReference>
<dbReference type="PANTHER" id="PTHR21237">
    <property type="entry name" value="GRPE PROTEIN"/>
    <property type="match status" value="1"/>
</dbReference>
<dbReference type="PANTHER" id="PTHR21237:SF23">
    <property type="entry name" value="GRPE PROTEIN HOMOLOG, MITOCHONDRIAL"/>
    <property type="match status" value="1"/>
</dbReference>
<dbReference type="Pfam" id="PF01025">
    <property type="entry name" value="GrpE"/>
    <property type="match status" value="1"/>
</dbReference>
<dbReference type="PRINTS" id="PR00773">
    <property type="entry name" value="GRPEPROTEIN"/>
</dbReference>
<dbReference type="SUPFAM" id="SSF58014">
    <property type="entry name" value="Coiled-coil domain of nucleotide exchange factor GrpE"/>
    <property type="match status" value="1"/>
</dbReference>
<dbReference type="SUPFAM" id="SSF51064">
    <property type="entry name" value="Head domain of nucleotide exchange factor GrpE"/>
    <property type="match status" value="1"/>
</dbReference>
<dbReference type="PROSITE" id="PS01071">
    <property type="entry name" value="GRPE"/>
    <property type="match status" value="1"/>
</dbReference>
<comment type="function">
    <text evidence="1">Participates actively in the response to hyperosmotic and heat shock by preventing the aggregation of stress-denatured proteins, in association with DnaK and GrpE. It is the nucleotide exchange factor for DnaK and may function as a thermosensor. Unfolded proteins bind initially to DnaJ; upon interaction with the DnaJ-bound protein, DnaK hydrolyzes its bound ATP, resulting in the formation of a stable complex. GrpE releases ADP from DnaK; ATP binding to DnaK triggers the release of the substrate protein, thus completing the reaction cycle. Several rounds of ATP-dependent interactions between DnaJ, DnaK and GrpE are required for fully efficient folding.</text>
</comment>
<comment type="subunit">
    <text evidence="1">Homodimer.</text>
</comment>
<comment type="subcellular location">
    <subcellularLocation>
        <location evidence="1">Cytoplasm</location>
    </subcellularLocation>
</comment>
<comment type="similarity">
    <text evidence="1">Belongs to the GrpE family.</text>
</comment>
<keyword id="KW-0143">Chaperone</keyword>
<keyword id="KW-0963">Cytoplasm</keyword>
<keyword id="KW-0346">Stress response</keyword>